<reference key="1">
    <citation type="journal article" date="2009" name="J. Bacteriol.">
        <title>Genome sequences of three Agrobacterium biovars help elucidate the evolution of multichromosome genomes in bacteria.</title>
        <authorList>
            <person name="Slater S.C."/>
            <person name="Goldman B.S."/>
            <person name="Goodner B."/>
            <person name="Setubal J.C."/>
            <person name="Farrand S.K."/>
            <person name="Nester E.W."/>
            <person name="Burr T.J."/>
            <person name="Banta L."/>
            <person name="Dickerman A.W."/>
            <person name="Paulsen I."/>
            <person name="Otten L."/>
            <person name="Suen G."/>
            <person name="Welch R."/>
            <person name="Almeida N.F."/>
            <person name="Arnold F."/>
            <person name="Burton O.T."/>
            <person name="Du Z."/>
            <person name="Ewing A."/>
            <person name="Godsy E."/>
            <person name="Heisel S."/>
            <person name="Houmiel K.L."/>
            <person name="Jhaveri J."/>
            <person name="Lu J."/>
            <person name="Miller N.M."/>
            <person name="Norton S."/>
            <person name="Chen Q."/>
            <person name="Phoolcharoen W."/>
            <person name="Ohlin V."/>
            <person name="Ondrusek D."/>
            <person name="Pride N."/>
            <person name="Stricklin S.L."/>
            <person name="Sun J."/>
            <person name="Wheeler C."/>
            <person name="Wilson L."/>
            <person name="Zhu H."/>
            <person name="Wood D.W."/>
        </authorList>
    </citation>
    <scope>NUCLEOTIDE SEQUENCE [LARGE SCALE GENOMIC DNA]</scope>
    <source>
        <strain>ATCC BAA-846 / DSM 112012 / S4</strain>
    </source>
</reference>
<dbReference type="EC" id="5.3.1.6" evidence="1"/>
<dbReference type="EMBL" id="CP000633">
    <property type="protein sequence ID" value="ACM36485.1"/>
    <property type="molecule type" value="Genomic_DNA"/>
</dbReference>
<dbReference type="RefSeq" id="WP_015915906.1">
    <property type="nucleotide sequence ID" value="NC_011989.1"/>
</dbReference>
<dbReference type="SMR" id="B9JW57"/>
<dbReference type="STRING" id="311402.Avi_2081"/>
<dbReference type="KEGG" id="avi:Avi_2081"/>
<dbReference type="eggNOG" id="COG0120">
    <property type="taxonomic scope" value="Bacteria"/>
</dbReference>
<dbReference type="HOGENOM" id="CLU_056590_1_0_5"/>
<dbReference type="UniPathway" id="UPA00115">
    <property type="reaction ID" value="UER00412"/>
</dbReference>
<dbReference type="Proteomes" id="UP000001596">
    <property type="component" value="Chromosome 1"/>
</dbReference>
<dbReference type="GO" id="GO:0004751">
    <property type="term" value="F:ribose-5-phosphate isomerase activity"/>
    <property type="evidence" value="ECO:0007669"/>
    <property type="project" value="UniProtKB-UniRule"/>
</dbReference>
<dbReference type="GO" id="GO:0009052">
    <property type="term" value="P:pentose-phosphate shunt, non-oxidative branch"/>
    <property type="evidence" value="ECO:0007669"/>
    <property type="project" value="UniProtKB-UniRule"/>
</dbReference>
<dbReference type="CDD" id="cd01398">
    <property type="entry name" value="RPI_A"/>
    <property type="match status" value="1"/>
</dbReference>
<dbReference type="FunFam" id="3.40.50.1360:FF:000001">
    <property type="entry name" value="Ribose-5-phosphate isomerase A"/>
    <property type="match status" value="1"/>
</dbReference>
<dbReference type="Gene3D" id="3.30.70.260">
    <property type="match status" value="1"/>
</dbReference>
<dbReference type="Gene3D" id="3.40.50.1360">
    <property type="match status" value="1"/>
</dbReference>
<dbReference type="HAMAP" id="MF_00170">
    <property type="entry name" value="Rib_5P_isom_A"/>
    <property type="match status" value="1"/>
</dbReference>
<dbReference type="InterPro" id="IPR037171">
    <property type="entry name" value="NagB/RpiA_transferase-like"/>
</dbReference>
<dbReference type="InterPro" id="IPR050262">
    <property type="entry name" value="Ribose-5P_isomerase"/>
</dbReference>
<dbReference type="InterPro" id="IPR020672">
    <property type="entry name" value="Ribose5P_isomerase_typA_subgr"/>
</dbReference>
<dbReference type="InterPro" id="IPR004788">
    <property type="entry name" value="Ribose5P_isomerase_type_A"/>
</dbReference>
<dbReference type="NCBIfam" id="NF001924">
    <property type="entry name" value="PRK00702.1"/>
    <property type="match status" value="1"/>
</dbReference>
<dbReference type="NCBIfam" id="TIGR00021">
    <property type="entry name" value="rpiA"/>
    <property type="match status" value="1"/>
</dbReference>
<dbReference type="PANTHER" id="PTHR43748">
    <property type="entry name" value="RIBOSE-5-PHOSPHATE ISOMERASE 3, CHLOROPLASTIC-RELATED"/>
    <property type="match status" value="1"/>
</dbReference>
<dbReference type="PANTHER" id="PTHR43748:SF3">
    <property type="entry name" value="RIBOSE-5-PHOSPHATE ISOMERASE 3, CHLOROPLASTIC-RELATED"/>
    <property type="match status" value="1"/>
</dbReference>
<dbReference type="Pfam" id="PF06026">
    <property type="entry name" value="Rib_5-P_isom_A"/>
    <property type="match status" value="1"/>
</dbReference>
<dbReference type="SUPFAM" id="SSF75445">
    <property type="entry name" value="D-ribose-5-phosphate isomerase (RpiA), lid domain"/>
    <property type="match status" value="1"/>
</dbReference>
<dbReference type="SUPFAM" id="SSF100950">
    <property type="entry name" value="NagB/RpiA/CoA transferase-like"/>
    <property type="match status" value="1"/>
</dbReference>
<proteinExistence type="inferred from homology"/>
<evidence type="ECO:0000255" key="1">
    <source>
        <dbReference type="HAMAP-Rule" id="MF_00170"/>
    </source>
</evidence>
<comment type="function">
    <text evidence="1">Catalyzes the reversible conversion of ribose-5-phosphate to ribulose 5-phosphate.</text>
</comment>
<comment type="catalytic activity">
    <reaction evidence="1">
        <text>aldehydo-D-ribose 5-phosphate = D-ribulose 5-phosphate</text>
        <dbReference type="Rhea" id="RHEA:14657"/>
        <dbReference type="ChEBI" id="CHEBI:58121"/>
        <dbReference type="ChEBI" id="CHEBI:58273"/>
        <dbReference type="EC" id="5.3.1.6"/>
    </reaction>
</comment>
<comment type="pathway">
    <text evidence="1">Carbohydrate degradation; pentose phosphate pathway; D-ribose 5-phosphate from D-ribulose 5-phosphate (non-oxidative stage): step 1/1.</text>
</comment>
<comment type="subunit">
    <text evidence="1">Homodimer.</text>
</comment>
<comment type="similarity">
    <text evidence="1">Belongs to the ribose 5-phosphate isomerase family.</text>
</comment>
<sequence length="232" mass="24218">MDVRQMKIKAAELALSYVENGMRLGIGTGSTAEEFVRLLAEKVADGFKVQGVPTSERTARLCLELGVPLMSLDELPELDLTVDGADELDRHLTLIKGGGGALLREKIVAAASSRVIVIADETKLVETLGAYPLPIEINGFGGIATRISIEKAAAKLGLSGTIGLRMSGDDLFMTDGGHYILDASFGRIPDAVALSQALHAIPGVVEHGLFIGMASLAVVAGSDGARVIEPVA</sequence>
<feature type="chain" id="PRO_1000194689" description="Ribose-5-phosphate isomerase A">
    <location>
        <begin position="1"/>
        <end position="232"/>
    </location>
</feature>
<feature type="active site" description="Proton acceptor" evidence="1">
    <location>
        <position position="105"/>
    </location>
</feature>
<feature type="binding site" evidence="1">
    <location>
        <begin position="28"/>
        <end position="31"/>
    </location>
    <ligand>
        <name>substrate</name>
    </ligand>
</feature>
<feature type="binding site" evidence="1">
    <location>
        <begin position="83"/>
        <end position="86"/>
    </location>
    <ligand>
        <name>substrate</name>
    </ligand>
</feature>
<feature type="binding site" evidence="1">
    <location>
        <begin position="96"/>
        <end position="99"/>
    </location>
    <ligand>
        <name>substrate</name>
    </ligand>
</feature>
<feature type="binding site" evidence="1">
    <location>
        <position position="123"/>
    </location>
    <ligand>
        <name>substrate</name>
    </ligand>
</feature>
<accession>B9JW57</accession>
<protein>
    <recommendedName>
        <fullName evidence="1">Ribose-5-phosphate isomerase A</fullName>
        <ecNumber evidence="1">5.3.1.6</ecNumber>
    </recommendedName>
    <alternativeName>
        <fullName evidence="1">Phosphoriboisomerase A</fullName>
        <shortName evidence="1">PRI</shortName>
    </alternativeName>
</protein>
<gene>
    <name evidence="1" type="primary">rpiA</name>
    <name type="ordered locus">Avi_2081</name>
</gene>
<keyword id="KW-0413">Isomerase</keyword>
<keyword id="KW-1185">Reference proteome</keyword>
<name>RPIA_ALLAM</name>
<organism>
    <name type="scientific">Allorhizobium ampelinum (strain ATCC BAA-846 / DSM 112012 / S4)</name>
    <name type="common">Agrobacterium vitis (strain S4)</name>
    <dbReference type="NCBI Taxonomy" id="311402"/>
    <lineage>
        <taxon>Bacteria</taxon>
        <taxon>Pseudomonadati</taxon>
        <taxon>Pseudomonadota</taxon>
        <taxon>Alphaproteobacteria</taxon>
        <taxon>Hyphomicrobiales</taxon>
        <taxon>Rhizobiaceae</taxon>
        <taxon>Rhizobium/Agrobacterium group</taxon>
        <taxon>Allorhizobium</taxon>
        <taxon>Allorhizobium ampelinum</taxon>
    </lineage>
</organism>